<keyword id="KW-0221">Differentiation</keyword>
<keyword id="KW-0539">Nucleus</keyword>
<keyword id="KW-1267">Proteomics identification</keyword>
<keyword id="KW-1185">Reference proteome</keyword>
<keyword id="KW-0804">Transcription</keyword>
<keyword id="KW-0805">Transcription regulation</keyword>
<proteinExistence type="evidence at protein level"/>
<dbReference type="EMBL" id="D45370">
    <property type="protein sequence ID" value="BAA08226.1"/>
    <property type="molecule type" value="mRNA"/>
</dbReference>
<dbReference type="EMBL" id="AL136982">
    <property type="status" value="NOT_ANNOTATED_CDS"/>
    <property type="molecule type" value="Genomic_DNA"/>
</dbReference>
<dbReference type="EMBL" id="BC004471">
    <property type="protein sequence ID" value="AAH04471.1"/>
    <property type="molecule type" value="mRNA"/>
</dbReference>
<dbReference type="CCDS" id="CCDS7381.1"/>
<dbReference type="RefSeq" id="NP_006820.1">
    <property type="nucleotide sequence ID" value="NM_006829.3"/>
</dbReference>
<dbReference type="SMR" id="Q15847"/>
<dbReference type="BioGRID" id="116171">
    <property type="interactions" value="11"/>
</dbReference>
<dbReference type="FunCoup" id="Q15847">
    <property type="interactions" value="147"/>
</dbReference>
<dbReference type="IntAct" id="Q15847">
    <property type="interactions" value="4"/>
</dbReference>
<dbReference type="MINT" id="Q15847"/>
<dbReference type="STRING" id="9606.ENSP00000361083"/>
<dbReference type="GlyCosmos" id="Q15847">
    <property type="glycosylation" value="1 site, 1 glycan"/>
</dbReference>
<dbReference type="GlyGen" id="Q15847">
    <property type="glycosylation" value="2 sites, 2 O-linked glycans (2 sites)"/>
</dbReference>
<dbReference type="iPTMnet" id="Q15847"/>
<dbReference type="PhosphoSitePlus" id="Q15847"/>
<dbReference type="BioMuta" id="ADIRF"/>
<dbReference type="DMDM" id="8927989"/>
<dbReference type="jPOST" id="Q15847"/>
<dbReference type="MassIVE" id="Q15847"/>
<dbReference type="PaxDb" id="9606-ENSP00000361083"/>
<dbReference type="PeptideAtlas" id="Q15847"/>
<dbReference type="ProteomicsDB" id="60790"/>
<dbReference type="Pumba" id="Q15847"/>
<dbReference type="Antibodypedia" id="56434">
    <property type="antibodies" value="54 antibodies from 13 providers"/>
</dbReference>
<dbReference type="DNASU" id="10974"/>
<dbReference type="Ensembl" id="ENST00000372013.8">
    <property type="protein sequence ID" value="ENSP00000361083.3"/>
    <property type="gene ID" value="ENSG00000148671.15"/>
</dbReference>
<dbReference type="Ensembl" id="ENST00000561504.2">
    <property type="protein sequence ID" value="ENSP00000475582.1"/>
    <property type="gene ID" value="ENSG00000148671.15"/>
</dbReference>
<dbReference type="GeneID" id="10974"/>
<dbReference type="KEGG" id="hsa:10974"/>
<dbReference type="MANE-Select" id="ENST00000372013.8">
    <property type="protein sequence ID" value="ENSP00000361083.3"/>
    <property type="RefSeq nucleotide sequence ID" value="NM_006829.3"/>
    <property type="RefSeq protein sequence ID" value="NP_006820.1"/>
</dbReference>
<dbReference type="AGR" id="HGNC:24043"/>
<dbReference type="CTD" id="10974"/>
<dbReference type="DisGeNET" id="10974"/>
<dbReference type="GeneCards" id="ADIRF"/>
<dbReference type="HGNC" id="HGNC:24043">
    <property type="gene designation" value="ADIRF"/>
</dbReference>
<dbReference type="HPA" id="ENSG00000148671">
    <property type="expression patterns" value="Tissue enhanced (adipose)"/>
</dbReference>
<dbReference type="neXtProt" id="NX_Q15847"/>
<dbReference type="OpenTargets" id="ENSG00000148671"/>
<dbReference type="PharmGKB" id="PA134930409"/>
<dbReference type="VEuPathDB" id="HostDB:ENSG00000148671"/>
<dbReference type="eggNOG" id="ENOG502SYWB">
    <property type="taxonomic scope" value="Eukaryota"/>
</dbReference>
<dbReference type="GeneTree" id="ENSGT00390000017446"/>
<dbReference type="HOGENOM" id="CLU_199186_0_0_1"/>
<dbReference type="InParanoid" id="Q15847"/>
<dbReference type="OMA" id="XDQATET"/>
<dbReference type="OrthoDB" id="9417026at2759"/>
<dbReference type="PAN-GO" id="Q15847">
    <property type="GO annotations" value="2 GO annotations based on evolutionary models"/>
</dbReference>
<dbReference type="PhylomeDB" id="Q15847"/>
<dbReference type="TreeFam" id="TF341403"/>
<dbReference type="PathwayCommons" id="Q15847"/>
<dbReference type="Reactome" id="R-HSA-381340">
    <property type="pathway name" value="Transcriptional regulation of white adipocyte differentiation"/>
</dbReference>
<dbReference type="SignaLink" id="Q15847"/>
<dbReference type="BioGRID-ORCS" id="10974">
    <property type="hits" value="8 hits in 1148 CRISPR screens"/>
</dbReference>
<dbReference type="ChiTaRS" id="ADIRF">
    <property type="organism name" value="human"/>
</dbReference>
<dbReference type="GenomeRNAi" id="10974"/>
<dbReference type="Pharos" id="Q15847">
    <property type="development level" value="Tbio"/>
</dbReference>
<dbReference type="PRO" id="PR:Q15847"/>
<dbReference type="Proteomes" id="UP000005640">
    <property type="component" value="Chromosome 10"/>
</dbReference>
<dbReference type="RNAct" id="Q15847">
    <property type="molecule type" value="protein"/>
</dbReference>
<dbReference type="Bgee" id="ENSG00000148671">
    <property type="expression patterns" value="Expressed in popliteal artery and 200 other cell types or tissues"/>
</dbReference>
<dbReference type="ExpressionAtlas" id="Q15847">
    <property type="expression patterns" value="baseline and differential"/>
</dbReference>
<dbReference type="GO" id="GO:0005829">
    <property type="term" value="C:cytosol"/>
    <property type="evidence" value="ECO:0000314"/>
    <property type="project" value="HPA"/>
</dbReference>
<dbReference type="GO" id="GO:0070062">
    <property type="term" value="C:extracellular exosome"/>
    <property type="evidence" value="ECO:0007005"/>
    <property type="project" value="UniProtKB"/>
</dbReference>
<dbReference type="GO" id="GO:0005654">
    <property type="term" value="C:nucleoplasm"/>
    <property type="evidence" value="ECO:0000314"/>
    <property type="project" value="HPA"/>
</dbReference>
<dbReference type="GO" id="GO:0005634">
    <property type="term" value="C:nucleus"/>
    <property type="evidence" value="ECO:0000314"/>
    <property type="project" value="UniProtKB"/>
</dbReference>
<dbReference type="GO" id="GO:0030154">
    <property type="term" value="P:cell differentiation"/>
    <property type="evidence" value="ECO:0007669"/>
    <property type="project" value="UniProtKB-KW"/>
</dbReference>
<dbReference type="GO" id="GO:0045600">
    <property type="term" value="P:positive regulation of fat cell differentiation"/>
    <property type="evidence" value="ECO:0000314"/>
    <property type="project" value="UniProtKB"/>
</dbReference>
<dbReference type="GO" id="GO:0045944">
    <property type="term" value="P:positive regulation of transcription by RNA polymerase II"/>
    <property type="evidence" value="ECO:0000314"/>
    <property type="project" value="UniProtKB"/>
</dbReference>
<dbReference type="InterPro" id="IPR034450">
    <property type="entry name" value="ADIRF"/>
</dbReference>
<dbReference type="PANTHER" id="PTHR39227">
    <property type="entry name" value="ADIPOGENESIS REGULATORY FACTOR"/>
    <property type="match status" value="1"/>
</dbReference>
<dbReference type="PANTHER" id="PTHR39227:SF1">
    <property type="entry name" value="ADIPOGENESIS REGULATORY FACTOR"/>
    <property type="match status" value="1"/>
</dbReference>
<organism>
    <name type="scientific">Homo sapiens</name>
    <name type="common">Human</name>
    <dbReference type="NCBI Taxonomy" id="9606"/>
    <lineage>
        <taxon>Eukaryota</taxon>
        <taxon>Metazoa</taxon>
        <taxon>Chordata</taxon>
        <taxon>Craniata</taxon>
        <taxon>Vertebrata</taxon>
        <taxon>Euteleostomi</taxon>
        <taxon>Mammalia</taxon>
        <taxon>Eutheria</taxon>
        <taxon>Euarchontoglires</taxon>
        <taxon>Primates</taxon>
        <taxon>Haplorrhini</taxon>
        <taxon>Catarrhini</taxon>
        <taxon>Hominidae</taxon>
        <taxon>Homo</taxon>
    </lineage>
</organism>
<sequence length="76" mass="7855">MASKGLQDLKQQVEGTAQEAVSAAGAAAQQVVDQATEAGQKAMDQLAKTTQETIDKTANQASDTFSGIGKKFGLLK</sequence>
<comment type="function">
    <text evidence="1 2">Plays a role in fat cell development; promotes adipogenic differentiation and stimulates transcription initiation of master adipogenesis factors like PPARG and CEBPA at early stages of preadipocyte differentiation. Its overexpression confers resistance to the anticancer chemotherapeutic drug cisplatin.</text>
</comment>
<comment type="interaction">
    <interactant intactId="EBI-7162516">
        <id>Q15847</id>
    </interactant>
    <interactant intactId="EBI-3910835">
        <id>Q14116</id>
        <label>IL18</label>
    </interactant>
    <organismsDiffer>false</organismsDiffer>
    <experiments>3</experiments>
</comment>
<comment type="subcellular location">
    <subcellularLocation>
        <location evidence="2">Nucleus</location>
    </subcellularLocation>
</comment>
<comment type="tissue specificity">
    <text evidence="2 3">Expressed in adipose tissue (at protein level). Highly expressed in omental and subcutaneous adipose tissues. Expressed in heart, cornea, liver, kidney and spleen.</text>
</comment>
<comment type="induction">
    <text evidence="1 2">Up-regulated during pre-adipocyte differentiation. Up-regulated following DNA damage induced by UV irradiation.</text>
</comment>
<gene>
    <name type="primary">ADIRF</name>
    <name type="synonym">AFRO</name>
    <name type="synonym">APM2</name>
    <name type="synonym">C10orf116</name>
</gene>
<protein>
    <recommendedName>
        <fullName>Adipogenesis regulatory factor</fullName>
    </recommendedName>
    <alternativeName>
        <fullName>Adipogenesis factor rich in obesity</fullName>
    </alternativeName>
    <alternativeName>
        <fullName>Adipose most abundant gene transcript 2 protein</fullName>
    </alternativeName>
    <alternativeName>
        <fullName>Adipose-specific protein 2</fullName>
        <shortName>apM-2</shortName>
    </alternativeName>
</protein>
<feature type="chain" id="PRO_0000064637" description="Adipogenesis regulatory factor">
    <location>
        <begin position="1"/>
        <end position="76"/>
    </location>
</feature>
<name>ADIRF_HUMAN</name>
<accession>Q15847</accession>
<evidence type="ECO:0000269" key="1">
    <source>
    </source>
</evidence>
<evidence type="ECO:0000269" key="2">
    <source>
    </source>
</evidence>
<evidence type="ECO:0000269" key="3">
    <source ref="4"/>
</evidence>
<reference key="1">
    <citation type="submission" date="1995-01" db="EMBL/GenBank/DDBJ databases">
        <authorList>
            <person name="Maeda K."/>
        </authorList>
    </citation>
    <scope>NUCLEOTIDE SEQUENCE [MRNA]</scope>
    <source>
        <tissue>Adipose tissue</tissue>
    </source>
</reference>
<reference key="2">
    <citation type="journal article" date="2004" name="Nature">
        <title>The DNA sequence and comparative analysis of human chromosome 10.</title>
        <authorList>
            <person name="Deloukas P."/>
            <person name="Earthrowl M.E."/>
            <person name="Grafham D.V."/>
            <person name="Rubenfield M."/>
            <person name="French L."/>
            <person name="Steward C.A."/>
            <person name="Sims S.K."/>
            <person name="Jones M.C."/>
            <person name="Searle S."/>
            <person name="Scott C."/>
            <person name="Howe K."/>
            <person name="Hunt S.E."/>
            <person name="Andrews T.D."/>
            <person name="Gilbert J.G.R."/>
            <person name="Swarbreck D."/>
            <person name="Ashurst J.L."/>
            <person name="Taylor A."/>
            <person name="Battles J."/>
            <person name="Bird C.P."/>
            <person name="Ainscough R."/>
            <person name="Almeida J.P."/>
            <person name="Ashwell R.I.S."/>
            <person name="Ambrose K.D."/>
            <person name="Babbage A.K."/>
            <person name="Bagguley C.L."/>
            <person name="Bailey J."/>
            <person name="Banerjee R."/>
            <person name="Bates K."/>
            <person name="Beasley H."/>
            <person name="Bray-Allen S."/>
            <person name="Brown A.J."/>
            <person name="Brown J.Y."/>
            <person name="Burford D.C."/>
            <person name="Burrill W."/>
            <person name="Burton J."/>
            <person name="Cahill P."/>
            <person name="Camire D."/>
            <person name="Carter N.P."/>
            <person name="Chapman J.C."/>
            <person name="Clark S.Y."/>
            <person name="Clarke G."/>
            <person name="Clee C.M."/>
            <person name="Clegg S."/>
            <person name="Corby N."/>
            <person name="Coulson A."/>
            <person name="Dhami P."/>
            <person name="Dutta I."/>
            <person name="Dunn M."/>
            <person name="Faulkner L."/>
            <person name="Frankish A."/>
            <person name="Frankland J.A."/>
            <person name="Garner P."/>
            <person name="Garnett J."/>
            <person name="Gribble S."/>
            <person name="Griffiths C."/>
            <person name="Grocock R."/>
            <person name="Gustafson E."/>
            <person name="Hammond S."/>
            <person name="Harley J.L."/>
            <person name="Hart E."/>
            <person name="Heath P.D."/>
            <person name="Ho T.P."/>
            <person name="Hopkins B."/>
            <person name="Horne J."/>
            <person name="Howden P.J."/>
            <person name="Huckle E."/>
            <person name="Hynds C."/>
            <person name="Johnson C."/>
            <person name="Johnson D."/>
            <person name="Kana A."/>
            <person name="Kay M."/>
            <person name="Kimberley A.M."/>
            <person name="Kershaw J.K."/>
            <person name="Kokkinaki M."/>
            <person name="Laird G.K."/>
            <person name="Lawlor S."/>
            <person name="Lee H.M."/>
            <person name="Leongamornlert D.A."/>
            <person name="Laird G."/>
            <person name="Lloyd C."/>
            <person name="Lloyd D.M."/>
            <person name="Loveland J."/>
            <person name="Lovell J."/>
            <person name="McLaren S."/>
            <person name="McLay K.E."/>
            <person name="McMurray A."/>
            <person name="Mashreghi-Mohammadi M."/>
            <person name="Matthews L."/>
            <person name="Milne S."/>
            <person name="Nickerson T."/>
            <person name="Nguyen M."/>
            <person name="Overton-Larty E."/>
            <person name="Palmer S.A."/>
            <person name="Pearce A.V."/>
            <person name="Peck A.I."/>
            <person name="Pelan S."/>
            <person name="Phillimore B."/>
            <person name="Porter K."/>
            <person name="Rice C.M."/>
            <person name="Rogosin A."/>
            <person name="Ross M.T."/>
            <person name="Sarafidou T."/>
            <person name="Sehra H.K."/>
            <person name="Shownkeen R."/>
            <person name="Skuce C.D."/>
            <person name="Smith M."/>
            <person name="Standring L."/>
            <person name="Sycamore N."/>
            <person name="Tester J."/>
            <person name="Thorpe A."/>
            <person name="Torcasso W."/>
            <person name="Tracey A."/>
            <person name="Tromans A."/>
            <person name="Tsolas J."/>
            <person name="Wall M."/>
            <person name="Walsh J."/>
            <person name="Wang H."/>
            <person name="Weinstock K."/>
            <person name="West A.P."/>
            <person name="Willey D.L."/>
            <person name="Whitehead S.L."/>
            <person name="Wilming L."/>
            <person name="Wray P.W."/>
            <person name="Young L."/>
            <person name="Chen Y."/>
            <person name="Lovering R.C."/>
            <person name="Moschonas N.K."/>
            <person name="Siebert R."/>
            <person name="Fechtel K."/>
            <person name="Bentley D."/>
            <person name="Durbin R.M."/>
            <person name="Hubbard T."/>
            <person name="Doucette-Stamm L."/>
            <person name="Beck S."/>
            <person name="Smith D.R."/>
            <person name="Rogers J."/>
        </authorList>
    </citation>
    <scope>NUCLEOTIDE SEQUENCE [LARGE SCALE GENOMIC DNA]</scope>
</reference>
<reference key="3">
    <citation type="journal article" date="2004" name="Genome Res.">
        <title>The status, quality, and expansion of the NIH full-length cDNA project: the Mammalian Gene Collection (MGC).</title>
        <authorList>
            <consortium name="The MGC Project Team"/>
        </authorList>
    </citation>
    <scope>NUCLEOTIDE SEQUENCE [LARGE SCALE MRNA]</scope>
    <source>
        <tissue>Pancreas</tissue>
    </source>
</reference>
<reference key="4">
    <citation type="submission" date="2004-09" db="UniProtKB">
        <authorList>
            <person name="Richardson M."/>
        </authorList>
    </citation>
    <scope>TISSUE SPECIFICITY</scope>
</reference>
<reference key="5">
    <citation type="journal article" date="2009" name="Int. J. Cancer">
        <title>APM2 is a novel mediator of cisplatin resistance in a variety of cancer cell types regardless of p53 or MMR status.</title>
        <authorList>
            <person name="Scott B.J."/>
            <person name="Qutob S."/>
            <person name="Liu Q.Y."/>
            <person name="Ng C.E."/>
        </authorList>
    </citation>
    <scope>FUNCTION IN RESISTANCE TO CISPLATIN</scope>
    <scope>INDUCTION</scope>
</reference>
<reference key="6">
    <citation type="journal article" date="2011" name="BMC Syst. Biol.">
        <title>Initial characterization of the human central proteome.</title>
        <authorList>
            <person name="Burkard T.R."/>
            <person name="Planyavsky M."/>
            <person name="Kaupe I."/>
            <person name="Breitwieser F.P."/>
            <person name="Buerckstuemmer T."/>
            <person name="Bennett K.L."/>
            <person name="Superti-Furga G."/>
            <person name="Colinge J."/>
        </authorList>
    </citation>
    <scope>IDENTIFICATION BY MASS SPECTROMETRY [LARGE SCALE ANALYSIS]</scope>
</reference>
<reference key="7">
    <citation type="journal article" date="2013" name="J. Bioenerg. Biomembr.">
        <title>A Novel pro-adipogenesis factor abundant in adipose tissues and over-expressed in obesity acts upstream of PPARgamma and C/EBPalpha.</title>
        <authorList>
            <person name="Ni Y."/>
            <person name="Ji C."/>
            <person name="Wang B."/>
            <person name="Qiu J."/>
            <person name="Wang J."/>
            <person name="Guo X."/>
        </authorList>
    </citation>
    <scope>FUNCTION</scope>
    <scope>SUBCELLULAR LOCATION</scope>
    <scope>INDUCTION</scope>
    <scope>TISSUE SPECIFICITY</scope>
</reference>
<reference key="8">
    <citation type="journal article" date="2014" name="J. Proteomics">
        <title>An enzyme assisted RP-RPLC approach for in-depth analysis of human liver phosphoproteome.</title>
        <authorList>
            <person name="Bian Y."/>
            <person name="Song C."/>
            <person name="Cheng K."/>
            <person name="Dong M."/>
            <person name="Wang F."/>
            <person name="Huang J."/>
            <person name="Sun D."/>
            <person name="Wang L."/>
            <person name="Ye M."/>
            <person name="Zou H."/>
        </authorList>
    </citation>
    <scope>IDENTIFICATION BY MASS SPECTROMETRY [LARGE SCALE ANALYSIS]</scope>
    <source>
        <tissue>Liver</tissue>
    </source>
</reference>